<reference key="1">
    <citation type="journal article" date="1997" name="Nature">
        <title>The complete genome sequence of the hyperthermophilic, sulphate-reducing archaeon Archaeoglobus fulgidus.</title>
        <authorList>
            <person name="Klenk H.-P."/>
            <person name="Clayton R.A."/>
            <person name="Tomb J.-F."/>
            <person name="White O."/>
            <person name="Nelson K.E."/>
            <person name="Ketchum K.A."/>
            <person name="Dodson R.J."/>
            <person name="Gwinn M.L."/>
            <person name="Hickey E.K."/>
            <person name="Peterson J.D."/>
            <person name="Richardson D.L."/>
            <person name="Kerlavage A.R."/>
            <person name="Graham D.E."/>
            <person name="Kyrpides N.C."/>
            <person name="Fleischmann R.D."/>
            <person name="Quackenbush J."/>
            <person name="Lee N.H."/>
            <person name="Sutton G.G."/>
            <person name="Gill S.R."/>
            <person name="Kirkness E.F."/>
            <person name="Dougherty B.A."/>
            <person name="McKenney K."/>
            <person name="Adams M.D."/>
            <person name="Loftus B.J."/>
            <person name="Peterson S.N."/>
            <person name="Reich C.I."/>
            <person name="McNeil L.K."/>
            <person name="Badger J.H."/>
            <person name="Glodek A."/>
            <person name="Zhou L."/>
            <person name="Overbeek R."/>
            <person name="Gocayne J.D."/>
            <person name="Weidman J.F."/>
            <person name="McDonald L.A."/>
            <person name="Utterback T.R."/>
            <person name="Cotton M.D."/>
            <person name="Spriggs T."/>
            <person name="Artiach P."/>
            <person name="Kaine B.P."/>
            <person name="Sykes S.M."/>
            <person name="Sadow P.W."/>
            <person name="D'Andrea K.P."/>
            <person name="Bowman C."/>
            <person name="Fujii C."/>
            <person name="Garland S.A."/>
            <person name="Mason T.M."/>
            <person name="Olsen G.J."/>
            <person name="Fraser C.M."/>
            <person name="Smith H.O."/>
            <person name="Woese C.R."/>
            <person name="Venter J.C."/>
        </authorList>
    </citation>
    <scope>NUCLEOTIDE SEQUENCE [LARGE SCALE GENOMIC DNA]</scope>
    <source>
        <strain>ATCC 49558 / DSM 4304 / JCM 9628 / NBRC 100126 / VC-16</strain>
    </source>
</reference>
<reference key="2">
    <citation type="journal article" date="2005" name="Nucleic Acids Res.">
        <title>Toxin-antitoxin loci are highly abundant in free-living but lost from host-associated prokaryotes.</title>
        <authorList>
            <person name="Pandey D.P."/>
            <person name="Gerdes K."/>
        </authorList>
    </citation>
    <scope>POSSIBLE FUNCTION</scope>
    <source>
        <strain>ATCC 49558 / DSM 4304 / JCM 9628 / NBRC 100126 / VC-16</strain>
    </source>
</reference>
<accession>O29173</accession>
<keyword id="KW-1185">Reference proteome</keyword>
<keyword id="KW-1277">Toxin-antitoxin system</keyword>
<proteinExistence type="inferred from homology"/>
<gene>
    <name type="primary">vapB13</name>
    <name type="ordered locus">AF_1092</name>
</gene>
<feature type="chain" id="PRO_0000156854" description="Putative antitoxin VapB13">
    <location>
        <begin position="1"/>
        <end position="61"/>
    </location>
</feature>
<evidence type="ECO:0000305" key="1"/>
<dbReference type="EMBL" id="AE000782">
    <property type="protein sequence ID" value="AAB90155.1"/>
    <property type="molecule type" value="Genomic_DNA"/>
</dbReference>
<dbReference type="PIR" id="C69386">
    <property type="entry name" value="C69386"/>
</dbReference>
<dbReference type="RefSeq" id="WP_010878588.1">
    <property type="nucleotide sequence ID" value="NC_000917.1"/>
</dbReference>
<dbReference type="SMR" id="O29173"/>
<dbReference type="STRING" id="224325.AF_1092"/>
<dbReference type="PaxDb" id="224325-AF_1092"/>
<dbReference type="EnsemblBacteria" id="AAB90155">
    <property type="protein sequence ID" value="AAB90155"/>
    <property type="gene ID" value="AF_1092"/>
</dbReference>
<dbReference type="KEGG" id="afu:AF_1092"/>
<dbReference type="eggNOG" id="arCOG03880">
    <property type="taxonomic scope" value="Archaea"/>
</dbReference>
<dbReference type="HOGENOM" id="CLU_200885_3_1_2"/>
<dbReference type="Proteomes" id="UP000002199">
    <property type="component" value="Chromosome"/>
</dbReference>
<dbReference type="Gene3D" id="4.10.1150.10">
    <property type="entry name" value="AF2212/PG0164-like"/>
    <property type="match status" value="1"/>
</dbReference>
<dbReference type="InterPro" id="IPR008203">
    <property type="entry name" value="AF2212-like"/>
</dbReference>
<dbReference type="InterPro" id="IPR024069">
    <property type="entry name" value="AF2212-like_dom_sf"/>
</dbReference>
<dbReference type="Pfam" id="PF01954">
    <property type="entry name" value="AF2212-like"/>
    <property type="match status" value="1"/>
</dbReference>
<dbReference type="SUPFAM" id="SSF141694">
    <property type="entry name" value="AF2212/PG0164-like"/>
    <property type="match status" value="1"/>
</dbReference>
<comment type="function">
    <text evidence="1">Possibly the antitoxin component of a type II toxin-antitoxin (TA) system. Its cognate toxin is VapC13 (Potential).</text>
</comment>
<comment type="similarity">
    <text evidence="1">Belongs to the UPF0165 family.</text>
</comment>
<sequence length="61" mass="6920">MPKIIEAIYENGVFKPLQKVDLKEGERVRVVVSEVVAKTRGLLKGCEMEEIIEEIESEGFL</sequence>
<organism>
    <name type="scientific">Archaeoglobus fulgidus (strain ATCC 49558 / DSM 4304 / JCM 9628 / NBRC 100126 / VC-16)</name>
    <dbReference type="NCBI Taxonomy" id="224325"/>
    <lineage>
        <taxon>Archaea</taxon>
        <taxon>Methanobacteriati</taxon>
        <taxon>Methanobacteriota</taxon>
        <taxon>Archaeoglobi</taxon>
        <taxon>Archaeoglobales</taxon>
        <taxon>Archaeoglobaceae</taxon>
        <taxon>Archaeoglobus</taxon>
    </lineage>
</organism>
<protein>
    <recommendedName>
        <fullName>Putative antitoxin VapB13</fullName>
    </recommendedName>
</protein>
<name>VPB13_ARCFU</name>